<sequence>MKLNVNPTRMELTKLKKRLTTATRGHKLLKDKQDELMRRFIGMIKKNNELRKDVEKELEGSFKDFLMASAVMSPEFLEEAVAYPKESISVDVKKQNIMSVNVPVFDFKRKLEGDKGSIFPYGFANTSAELDGAIEKLYGILPKLLELAKVEKACQLMADEIEKTRRRVNALEYMTIPQLEETIKFIQMKLDENERSTVTRLMKIKSMMEEKQSNMV</sequence>
<accession>C1FTN5</accession>
<name>VATD_CLOBJ</name>
<feature type="chain" id="PRO_1000173513" description="V-type ATP synthase subunit D">
    <location>
        <begin position="1"/>
        <end position="216"/>
    </location>
</feature>
<keyword id="KW-0066">ATP synthesis</keyword>
<keyword id="KW-0375">Hydrogen ion transport</keyword>
<keyword id="KW-0406">Ion transport</keyword>
<keyword id="KW-0813">Transport</keyword>
<reference key="1">
    <citation type="submission" date="2008-10" db="EMBL/GenBank/DDBJ databases">
        <title>Genome sequence of Clostridium botulinum A2 Kyoto.</title>
        <authorList>
            <person name="Shrivastava S."/>
            <person name="Brinkac L.M."/>
            <person name="Brown J.L."/>
            <person name="Bruce D."/>
            <person name="Detter C.C."/>
            <person name="Johnson E.A."/>
            <person name="Munk C.A."/>
            <person name="Smith L.A."/>
            <person name="Smith T.J."/>
            <person name="Sutton G."/>
            <person name="Brettin T.S."/>
        </authorList>
    </citation>
    <scope>NUCLEOTIDE SEQUENCE [LARGE SCALE GENOMIC DNA]</scope>
    <source>
        <strain>Kyoto / Type A2</strain>
    </source>
</reference>
<protein>
    <recommendedName>
        <fullName evidence="1">V-type ATP synthase subunit D</fullName>
    </recommendedName>
    <alternativeName>
        <fullName evidence="1">V-ATPase subunit D</fullName>
    </alternativeName>
</protein>
<comment type="function">
    <text evidence="1">Produces ATP from ADP in the presence of a proton gradient across the membrane.</text>
</comment>
<comment type="similarity">
    <text evidence="1">Belongs to the V-ATPase D subunit family.</text>
</comment>
<dbReference type="EMBL" id="CP001581">
    <property type="protein sequence ID" value="ACO83532.1"/>
    <property type="molecule type" value="Genomic_DNA"/>
</dbReference>
<dbReference type="RefSeq" id="WP_003359170.1">
    <property type="nucleotide sequence ID" value="NC_012563.1"/>
</dbReference>
<dbReference type="SMR" id="C1FTN5"/>
<dbReference type="KEGG" id="cby:CLM_2987"/>
<dbReference type="eggNOG" id="COG1394">
    <property type="taxonomic scope" value="Bacteria"/>
</dbReference>
<dbReference type="HOGENOM" id="CLU_069688_2_1_9"/>
<dbReference type="Proteomes" id="UP000001374">
    <property type="component" value="Chromosome"/>
</dbReference>
<dbReference type="GO" id="GO:0005524">
    <property type="term" value="F:ATP binding"/>
    <property type="evidence" value="ECO:0007669"/>
    <property type="project" value="UniProtKB-UniRule"/>
</dbReference>
<dbReference type="GO" id="GO:0046933">
    <property type="term" value="F:proton-transporting ATP synthase activity, rotational mechanism"/>
    <property type="evidence" value="ECO:0007669"/>
    <property type="project" value="UniProtKB-UniRule"/>
</dbReference>
<dbReference type="GO" id="GO:0046961">
    <property type="term" value="F:proton-transporting ATPase activity, rotational mechanism"/>
    <property type="evidence" value="ECO:0007669"/>
    <property type="project" value="InterPro"/>
</dbReference>
<dbReference type="GO" id="GO:0042777">
    <property type="term" value="P:proton motive force-driven plasma membrane ATP synthesis"/>
    <property type="evidence" value="ECO:0007669"/>
    <property type="project" value="UniProtKB-UniRule"/>
</dbReference>
<dbReference type="FunFam" id="1.10.287.3240:FF:000007">
    <property type="entry name" value="V-type ATP synthase subunit D"/>
    <property type="match status" value="1"/>
</dbReference>
<dbReference type="Gene3D" id="1.10.287.3240">
    <property type="match status" value="1"/>
</dbReference>
<dbReference type="HAMAP" id="MF_00271">
    <property type="entry name" value="ATP_synth_D_arch"/>
    <property type="match status" value="1"/>
</dbReference>
<dbReference type="InterPro" id="IPR002699">
    <property type="entry name" value="V_ATPase_D"/>
</dbReference>
<dbReference type="NCBIfam" id="NF001543">
    <property type="entry name" value="PRK00373.1-2"/>
    <property type="match status" value="1"/>
</dbReference>
<dbReference type="NCBIfam" id="TIGR00309">
    <property type="entry name" value="V_ATPase_subD"/>
    <property type="match status" value="1"/>
</dbReference>
<dbReference type="PANTHER" id="PTHR11671">
    <property type="entry name" value="V-TYPE ATP SYNTHASE SUBUNIT D"/>
    <property type="match status" value="1"/>
</dbReference>
<dbReference type="Pfam" id="PF01813">
    <property type="entry name" value="ATP-synt_D"/>
    <property type="match status" value="1"/>
</dbReference>
<evidence type="ECO:0000255" key="1">
    <source>
        <dbReference type="HAMAP-Rule" id="MF_00271"/>
    </source>
</evidence>
<gene>
    <name evidence="1" type="primary">atpD</name>
    <name type="ordered locus">CLM_2987</name>
</gene>
<organism>
    <name type="scientific">Clostridium botulinum (strain Kyoto / Type A2)</name>
    <dbReference type="NCBI Taxonomy" id="536232"/>
    <lineage>
        <taxon>Bacteria</taxon>
        <taxon>Bacillati</taxon>
        <taxon>Bacillota</taxon>
        <taxon>Clostridia</taxon>
        <taxon>Eubacteriales</taxon>
        <taxon>Clostridiaceae</taxon>
        <taxon>Clostridium</taxon>
    </lineage>
</organism>
<proteinExistence type="inferred from homology"/>